<organism>
    <name type="scientific">Shewanella sediminis (strain HAW-EB3)</name>
    <dbReference type="NCBI Taxonomy" id="425104"/>
    <lineage>
        <taxon>Bacteria</taxon>
        <taxon>Pseudomonadati</taxon>
        <taxon>Pseudomonadota</taxon>
        <taxon>Gammaproteobacteria</taxon>
        <taxon>Alteromonadales</taxon>
        <taxon>Shewanellaceae</taxon>
        <taxon>Shewanella</taxon>
    </lineage>
</organism>
<keyword id="KW-0028">Amino-acid biosynthesis</keyword>
<keyword id="KW-0057">Aromatic amino acid biosynthesis</keyword>
<keyword id="KW-0067">ATP-binding</keyword>
<keyword id="KW-0963">Cytoplasm</keyword>
<keyword id="KW-0418">Kinase</keyword>
<keyword id="KW-0460">Magnesium</keyword>
<keyword id="KW-0479">Metal-binding</keyword>
<keyword id="KW-0547">Nucleotide-binding</keyword>
<keyword id="KW-1185">Reference proteome</keyword>
<keyword id="KW-0808">Transferase</keyword>
<feature type="chain" id="PRO_1000075959" description="Shikimate kinase">
    <location>
        <begin position="1"/>
        <end position="171"/>
    </location>
</feature>
<feature type="binding site" evidence="1">
    <location>
        <begin position="14"/>
        <end position="19"/>
    </location>
    <ligand>
        <name>ATP</name>
        <dbReference type="ChEBI" id="CHEBI:30616"/>
    </ligand>
</feature>
<feature type="binding site" evidence="1">
    <location>
        <position position="18"/>
    </location>
    <ligand>
        <name>Mg(2+)</name>
        <dbReference type="ChEBI" id="CHEBI:18420"/>
    </ligand>
</feature>
<feature type="binding site" evidence="1">
    <location>
        <position position="36"/>
    </location>
    <ligand>
        <name>substrate</name>
    </ligand>
</feature>
<feature type="binding site" evidence="1">
    <location>
        <position position="60"/>
    </location>
    <ligand>
        <name>substrate</name>
    </ligand>
</feature>
<feature type="binding site" evidence="1">
    <location>
        <position position="82"/>
    </location>
    <ligand>
        <name>substrate</name>
    </ligand>
</feature>
<feature type="binding site" evidence="1">
    <location>
        <position position="120"/>
    </location>
    <ligand>
        <name>ATP</name>
        <dbReference type="ChEBI" id="CHEBI:30616"/>
    </ligand>
</feature>
<feature type="binding site" evidence="1">
    <location>
        <position position="139"/>
    </location>
    <ligand>
        <name>substrate</name>
    </ligand>
</feature>
<feature type="binding site" evidence="1">
    <location>
        <position position="156"/>
    </location>
    <ligand>
        <name>ATP</name>
        <dbReference type="ChEBI" id="CHEBI:30616"/>
    </ligand>
</feature>
<gene>
    <name evidence="1" type="primary">aroK</name>
    <name type="ordered locus">Ssed_4265</name>
</gene>
<evidence type="ECO:0000255" key="1">
    <source>
        <dbReference type="HAMAP-Rule" id="MF_00109"/>
    </source>
</evidence>
<accession>A8G196</accession>
<proteinExistence type="inferred from homology"/>
<reference key="1">
    <citation type="submission" date="2007-08" db="EMBL/GenBank/DDBJ databases">
        <title>Complete sequence of Shewanella sediminis HAW-EB3.</title>
        <authorList>
            <consortium name="US DOE Joint Genome Institute"/>
            <person name="Copeland A."/>
            <person name="Lucas S."/>
            <person name="Lapidus A."/>
            <person name="Barry K."/>
            <person name="Glavina del Rio T."/>
            <person name="Dalin E."/>
            <person name="Tice H."/>
            <person name="Pitluck S."/>
            <person name="Chertkov O."/>
            <person name="Brettin T."/>
            <person name="Bruce D."/>
            <person name="Detter J.C."/>
            <person name="Han C."/>
            <person name="Schmutz J."/>
            <person name="Larimer F."/>
            <person name="Land M."/>
            <person name="Hauser L."/>
            <person name="Kyrpides N."/>
            <person name="Kim E."/>
            <person name="Zhao J.-S."/>
            <person name="Richardson P."/>
        </authorList>
    </citation>
    <scope>NUCLEOTIDE SEQUENCE [LARGE SCALE GENOMIC DNA]</scope>
    <source>
        <strain>HAW-EB3</strain>
    </source>
</reference>
<sequence>MAEKRNIFLVGPMGAGKSTIGRHLAQMLHLDFHDSDQEIESRTGADIAWVFDVEGEEGFRVRETQVVADLTEKQGIVLATGGGSIQSKEIRNNLSARGIVVYLETTIDKQVARTQRDKRRPLLQVDDPREVLENLAATRNPLYEEIADVIVKTDEQSAKVVANQIIEQLGF</sequence>
<dbReference type="EC" id="2.7.1.71" evidence="1"/>
<dbReference type="EMBL" id="CP000821">
    <property type="protein sequence ID" value="ABV38869.1"/>
    <property type="molecule type" value="Genomic_DNA"/>
</dbReference>
<dbReference type="RefSeq" id="WP_012144598.1">
    <property type="nucleotide sequence ID" value="NC_009831.1"/>
</dbReference>
<dbReference type="SMR" id="A8G196"/>
<dbReference type="STRING" id="425104.Ssed_4265"/>
<dbReference type="KEGG" id="sse:Ssed_4265"/>
<dbReference type="eggNOG" id="COG0703">
    <property type="taxonomic scope" value="Bacteria"/>
</dbReference>
<dbReference type="HOGENOM" id="CLU_057607_2_2_6"/>
<dbReference type="OrthoDB" id="9800332at2"/>
<dbReference type="UniPathway" id="UPA00053">
    <property type="reaction ID" value="UER00088"/>
</dbReference>
<dbReference type="Proteomes" id="UP000002015">
    <property type="component" value="Chromosome"/>
</dbReference>
<dbReference type="GO" id="GO:0005829">
    <property type="term" value="C:cytosol"/>
    <property type="evidence" value="ECO:0007669"/>
    <property type="project" value="TreeGrafter"/>
</dbReference>
<dbReference type="GO" id="GO:0005524">
    <property type="term" value="F:ATP binding"/>
    <property type="evidence" value="ECO:0007669"/>
    <property type="project" value="UniProtKB-UniRule"/>
</dbReference>
<dbReference type="GO" id="GO:0000287">
    <property type="term" value="F:magnesium ion binding"/>
    <property type="evidence" value="ECO:0007669"/>
    <property type="project" value="UniProtKB-UniRule"/>
</dbReference>
<dbReference type="GO" id="GO:0004765">
    <property type="term" value="F:shikimate kinase activity"/>
    <property type="evidence" value="ECO:0007669"/>
    <property type="project" value="UniProtKB-UniRule"/>
</dbReference>
<dbReference type="GO" id="GO:0008652">
    <property type="term" value="P:amino acid biosynthetic process"/>
    <property type="evidence" value="ECO:0007669"/>
    <property type="project" value="UniProtKB-KW"/>
</dbReference>
<dbReference type="GO" id="GO:0009073">
    <property type="term" value="P:aromatic amino acid family biosynthetic process"/>
    <property type="evidence" value="ECO:0007669"/>
    <property type="project" value="UniProtKB-KW"/>
</dbReference>
<dbReference type="GO" id="GO:0009423">
    <property type="term" value="P:chorismate biosynthetic process"/>
    <property type="evidence" value="ECO:0007669"/>
    <property type="project" value="UniProtKB-UniRule"/>
</dbReference>
<dbReference type="CDD" id="cd00464">
    <property type="entry name" value="SK"/>
    <property type="match status" value="1"/>
</dbReference>
<dbReference type="FunFam" id="3.40.50.300:FF:000099">
    <property type="entry name" value="Shikimate kinase 1"/>
    <property type="match status" value="1"/>
</dbReference>
<dbReference type="Gene3D" id="3.40.50.300">
    <property type="entry name" value="P-loop containing nucleotide triphosphate hydrolases"/>
    <property type="match status" value="1"/>
</dbReference>
<dbReference type="HAMAP" id="MF_00109">
    <property type="entry name" value="Shikimate_kinase"/>
    <property type="match status" value="1"/>
</dbReference>
<dbReference type="InterPro" id="IPR027417">
    <property type="entry name" value="P-loop_NTPase"/>
</dbReference>
<dbReference type="InterPro" id="IPR031322">
    <property type="entry name" value="Shikimate/glucono_kinase"/>
</dbReference>
<dbReference type="InterPro" id="IPR000623">
    <property type="entry name" value="Shikimate_kinase/TSH1"/>
</dbReference>
<dbReference type="InterPro" id="IPR023000">
    <property type="entry name" value="Shikimate_kinase_CS"/>
</dbReference>
<dbReference type="NCBIfam" id="NF003456">
    <property type="entry name" value="PRK05057.1"/>
    <property type="match status" value="1"/>
</dbReference>
<dbReference type="PANTHER" id="PTHR21087">
    <property type="entry name" value="SHIKIMATE KINASE"/>
    <property type="match status" value="1"/>
</dbReference>
<dbReference type="PANTHER" id="PTHR21087:SF16">
    <property type="entry name" value="SHIKIMATE KINASE 1, CHLOROPLASTIC"/>
    <property type="match status" value="1"/>
</dbReference>
<dbReference type="Pfam" id="PF01202">
    <property type="entry name" value="SKI"/>
    <property type="match status" value="1"/>
</dbReference>
<dbReference type="PRINTS" id="PR01100">
    <property type="entry name" value="SHIKIMTKNASE"/>
</dbReference>
<dbReference type="SUPFAM" id="SSF52540">
    <property type="entry name" value="P-loop containing nucleoside triphosphate hydrolases"/>
    <property type="match status" value="1"/>
</dbReference>
<dbReference type="PROSITE" id="PS01128">
    <property type="entry name" value="SHIKIMATE_KINASE"/>
    <property type="match status" value="1"/>
</dbReference>
<name>AROK_SHESH</name>
<comment type="function">
    <text evidence="1">Catalyzes the specific phosphorylation of the 3-hydroxyl group of shikimic acid using ATP as a cosubstrate.</text>
</comment>
<comment type="catalytic activity">
    <reaction evidence="1">
        <text>shikimate + ATP = 3-phosphoshikimate + ADP + H(+)</text>
        <dbReference type="Rhea" id="RHEA:13121"/>
        <dbReference type="ChEBI" id="CHEBI:15378"/>
        <dbReference type="ChEBI" id="CHEBI:30616"/>
        <dbReference type="ChEBI" id="CHEBI:36208"/>
        <dbReference type="ChEBI" id="CHEBI:145989"/>
        <dbReference type="ChEBI" id="CHEBI:456216"/>
        <dbReference type="EC" id="2.7.1.71"/>
    </reaction>
</comment>
<comment type="cofactor">
    <cofactor evidence="1">
        <name>Mg(2+)</name>
        <dbReference type="ChEBI" id="CHEBI:18420"/>
    </cofactor>
    <text evidence="1">Binds 1 Mg(2+) ion per subunit.</text>
</comment>
<comment type="pathway">
    <text evidence="1">Metabolic intermediate biosynthesis; chorismate biosynthesis; chorismate from D-erythrose 4-phosphate and phosphoenolpyruvate: step 5/7.</text>
</comment>
<comment type="subunit">
    <text evidence="1">Monomer.</text>
</comment>
<comment type="subcellular location">
    <subcellularLocation>
        <location evidence="1">Cytoplasm</location>
    </subcellularLocation>
</comment>
<comment type="similarity">
    <text evidence="1">Belongs to the shikimate kinase family.</text>
</comment>
<protein>
    <recommendedName>
        <fullName evidence="1">Shikimate kinase</fullName>
        <shortName evidence="1">SK</shortName>
        <ecNumber evidence="1">2.7.1.71</ecNumber>
    </recommendedName>
</protein>